<gene>
    <name evidence="1" type="primary">gloB</name>
    <name type="ordered locus">VIBHAR_03213</name>
</gene>
<keyword id="KW-0378">Hydrolase</keyword>
<keyword id="KW-0479">Metal-binding</keyword>
<keyword id="KW-0862">Zinc</keyword>
<reference key="1">
    <citation type="submission" date="2007-08" db="EMBL/GenBank/DDBJ databases">
        <authorList>
            <consortium name="The Vibrio harveyi Genome Sequencing Project"/>
            <person name="Bassler B."/>
            <person name="Clifton S.W."/>
            <person name="Fulton L."/>
            <person name="Delehaunty K."/>
            <person name="Fronick C."/>
            <person name="Harrison M."/>
            <person name="Markivic C."/>
            <person name="Fulton R."/>
            <person name="Tin-Wollam A.-M."/>
            <person name="Shah N."/>
            <person name="Pepin K."/>
            <person name="Nash W."/>
            <person name="Thiruvilangam P."/>
            <person name="Bhonagiri V."/>
            <person name="Waters C."/>
            <person name="Tu K.C."/>
            <person name="Irgon J."/>
            <person name="Wilson R.K."/>
        </authorList>
    </citation>
    <scope>NUCLEOTIDE SEQUENCE [LARGE SCALE GENOMIC DNA]</scope>
    <source>
        <strain>ATCC BAA-1116 / BB120</strain>
    </source>
</reference>
<organism>
    <name type="scientific">Vibrio campbellii (strain ATCC BAA-1116)</name>
    <dbReference type="NCBI Taxonomy" id="2902295"/>
    <lineage>
        <taxon>Bacteria</taxon>
        <taxon>Pseudomonadati</taxon>
        <taxon>Pseudomonadota</taxon>
        <taxon>Gammaproteobacteria</taxon>
        <taxon>Vibrionales</taxon>
        <taxon>Vibrionaceae</taxon>
        <taxon>Vibrio</taxon>
    </lineage>
</organism>
<protein>
    <recommendedName>
        <fullName evidence="1">Hydroxyacylglutathione hydrolase</fullName>
        <ecNumber evidence="1">3.1.2.6</ecNumber>
    </recommendedName>
    <alternativeName>
        <fullName evidence="1">Glyoxalase II</fullName>
        <shortName evidence="1">Glx II</shortName>
    </alternativeName>
</protein>
<accession>A7MY07</accession>
<proteinExistence type="inferred from homology"/>
<sequence>MLEIKSIPAFNDNYIWLIQNSDKRCAVVDPGDAKPVLEYLQANELTLEAILITHHHNDHIGGVSDLVRAFPHVSVVGPKAEPIPTLTNAMEEGDKLELFGEIFMVLGLPGHTLGHIGYVGDGKLFCGDVLFSAGCGRIFEGTPEQMFESLSKIMKLPEETEVFCAHEYTASNVAFALAVEPDNEHLRQYRDDVNRLRGLNIPTIPTTLRKEKLINPFLRATNAEVIQSVTNRIENSDPCSVFTALREWKNEF</sequence>
<comment type="function">
    <text evidence="1">Thiolesterase that catalyzes the hydrolysis of S-D-lactoyl-glutathione to form glutathione and D-lactic acid.</text>
</comment>
<comment type="catalytic activity">
    <reaction evidence="1">
        <text>an S-(2-hydroxyacyl)glutathione + H2O = a 2-hydroxy carboxylate + glutathione + H(+)</text>
        <dbReference type="Rhea" id="RHEA:21864"/>
        <dbReference type="ChEBI" id="CHEBI:15377"/>
        <dbReference type="ChEBI" id="CHEBI:15378"/>
        <dbReference type="ChEBI" id="CHEBI:57925"/>
        <dbReference type="ChEBI" id="CHEBI:58896"/>
        <dbReference type="ChEBI" id="CHEBI:71261"/>
        <dbReference type="EC" id="3.1.2.6"/>
    </reaction>
</comment>
<comment type="cofactor">
    <cofactor evidence="1">
        <name>Zn(2+)</name>
        <dbReference type="ChEBI" id="CHEBI:29105"/>
    </cofactor>
    <text evidence="1">Binds 2 Zn(2+) ions per subunit.</text>
</comment>
<comment type="pathway">
    <text evidence="1">Secondary metabolite metabolism; methylglyoxal degradation; (R)-lactate from methylglyoxal: step 2/2.</text>
</comment>
<comment type="subunit">
    <text evidence="1">Monomer.</text>
</comment>
<comment type="similarity">
    <text evidence="1">Belongs to the metallo-beta-lactamase superfamily. Glyoxalase II family.</text>
</comment>
<evidence type="ECO:0000255" key="1">
    <source>
        <dbReference type="HAMAP-Rule" id="MF_01374"/>
    </source>
</evidence>
<dbReference type="EC" id="3.1.2.6" evidence="1"/>
<dbReference type="EMBL" id="CP000789">
    <property type="protein sequence ID" value="ABU72162.1"/>
    <property type="molecule type" value="Genomic_DNA"/>
</dbReference>
<dbReference type="RefSeq" id="WP_012128680.1">
    <property type="nucleotide sequence ID" value="NC_022269.1"/>
</dbReference>
<dbReference type="SMR" id="A7MY07"/>
<dbReference type="GeneID" id="67376545"/>
<dbReference type="KEGG" id="vha:VIBHAR_03213"/>
<dbReference type="PATRIC" id="fig|338187.25.peg.2976"/>
<dbReference type="UniPathway" id="UPA00619">
    <property type="reaction ID" value="UER00676"/>
</dbReference>
<dbReference type="Proteomes" id="UP000008152">
    <property type="component" value="Chromosome I"/>
</dbReference>
<dbReference type="GO" id="GO:0004416">
    <property type="term" value="F:hydroxyacylglutathione hydrolase activity"/>
    <property type="evidence" value="ECO:0007669"/>
    <property type="project" value="UniProtKB-UniRule"/>
</dbReference>
<dbReference type="GO" id="GO:0046872">
    <property type="term" value="F:metal ion binding"/>
    <property type="evidence" value="ECO:0007669"/>
    <property type="project" value="UniProtKB-KW"/>
</dbReference>
<dbReference type="GO" id="GO:0019243">
    <property type="term" value="P:methylglyoxal catabolic process to D-lactate via S-lactoyl-glutathione"/>
    <property type="evidence" value="ECO:0007669"/>
    <property type="project" value="InterPro"/>
</dbReference>
<dbReference type="CDD" id="cd07723">
    <property type="entry name" value="hydroxyacylglutathione_hydrolase_MBL-fold"/>
    <property type="match status" value="1"/>
</dbReference>
<dbReference type="Gene3D" id="3.60.15.10">
    <property type="entry name" value="Ribonuclease Z/Hydroxyacylglutathione hydrolase-like"/>
    <property type="match status" value="1"/>
</dbReference>
<dbReference type="HAMAP" id="MF_01374">
    <property type="entry name" value="Glyoxalase_2"/>
    <property type="match status" value="1"/>
</dbReference>
<dbReference type="InterPro" id="IPR035680">
    <property type="entry name" value="Clx_II_MBL"/>
</dbReference>
<dbReference type="InterPro" id="IPR050110">
    <property type="entry name" value="Glyoxalase_II_hydrolase"/>
</dbReference>
<dbReference type="InterPro" id="IPR032282">
    <property type="entry name" value="HAGH_C"/>
</dbReference>
<dbReference type="InterPro" id="IPR017782">
    <property type="entry name" value="Hydroxyacylglutathione_Hdrlase"/>
</dbReference>
<dbReference type="InterPro" id="IPR001279">
    <property type="entry name" value="Metallo-B-lactamas"/>
</dbReference>
<dbReference type="InterPro" id="IPR036866">
    <property type="entry name" value="RibonucZ/Hydroxyglut_hydro"/>
</dbReference>
<dbReference type="NCBIfam" id="TIGR03413">
    <property type="entry name" value="GSH_gloB"/>
    <property type="match status" value="1"/>
</dbReference>
<dbReference type="PANTHER" id="PTHR43705">
    <property type="entry name" value="HYDROXYACYLGLUTATHIONE HYDROLASE"/>
    <property type="match status" value="1"/>
</dbReference>
<dbReference type="PANTHER" id="PTHR43705:SF1">
    <property type="entry name" value="HYDROXYACYLGLUTATHIONE HYDROLASE GLOB"/>
    <property type="match status" value="1"/>
</dbReference>
<dbReference type="Pfam" id="PF16123">
    <property type="entry name" value="HAGH_C"/>
    <property type="match status" value="1"/>
</dbReference>
<dbReference type="Pfam" id="PF00753">
    <property type="entry name" value="Lactamase_B"/>
    <property type="match status" value="1"/>
</dbReference>
<dbReference type="PIRSF" id="PIRSF005457">
    <property type="entry name" value="Glx"/>
    <property type="match status" value="1"/>
</dbReference>
<dbReference type="SMART" id="SM00849">
    <property type="entry name" value="Lactamase_B"/>
    <property type="match status" value="1"/>
</dbReference>
<dbReference type="SUPFAM" id="SSF56281">
    <property type="entry name" value="Metallo-hydrolase/oxidoreductase"/>
    <property type="match status" value="1"/>
</dbReference>
<name>GLO2_VIBC1</name>
<feature type="chain" id="PRO_1000073457" description="Hydroxyacylglutathione hydrolase">
    <location>
        <begin position="1"/>
        <end position="252"/>
    </location>
</feature>
<feature type="binding site" evidence="1">
    <location>
        <position position="54"/>
    </location>
    <ligand>
        <name>Zn(2+)</name>
        <dbReference type="ChEBI" id="CHEBI:29105"/>
        <label>1</label>
    </ligand>
</feature>
<feature type="binding site" evidence="1">
    <location>
        <position position="56"/>
    </location>
    <ligand>
        <name>Zn(2+)</name>
        <dbReference type="ChEBI" id="CHEBI:29105"/>
        <label>1</label>
    </ligand>
</feature>
<feature type="binding site" evidence="1">
    <location>
        <position position="58"/>
    </location>
    <ligand>
        <name>Zn(2+)</name>
        <dbReference type="ChEBI" id="CHEBI:29105"/>
        <label>2</label>
    </ligand>
</feature>
<feature type="binding site" evidence="1">
    <location>
        <position position="59"/>
    </location>
    <ligand>
        <name>Zn(2+)</name>
        <dbReference type="ChEBI" id="CHEBI:29105"/>
        <label>2</label>
    </ligand>
</feature>
<feature type="binding site" evidence="1">
    <location>
        <position position="111"/>
    </location>
    <ligand>
        <name>Zn(2+)</name>
        <dbReference type="ChEBI" id="CHEBI:29105"/>
        <label>1</label>
    </ligand>
</feature>
<feature type="binding site" evidence="1">
    <location>
        <position position="128"/>
    </location>
    <ligand>
        <name>Zn(2+)</name>
        <dbReference type="ChEBI" id="CHEBI:29105"/>
        <label>1</label>
    </ligand>
</feature>
<feature type="binding site" evidence="1">
    <location>
        <position position="128"/>
    </location>
    <ligand>
        <name>Zn(2+)</name>
        <dbReference type="ChEBI" id="CHEBI:29105"/>
        <label>2</label>
    </ligand>
</feature>
<feature type="binding site" evidence="1">
    <location>
        <position position="166"/>
    </location>
    <ligand>
        <name>Zn(2+)</name>
        <dbReference type="ChEBI" id="CHEBI:29105"/>
        <label>2</label>
    </ligand>
</feature>